<comment type="subunit">
    <text evidence="1">Heterotetramer of two alpha and two beta subunits.</text>
</comment>
<comment type="subcellular location">
    <subcellularLocation>
        <location evidence="5">Cell projection</location>
        <location evidence="5">Cilium</location>
        <location evidence="5">Flagellum</location>
    </subcellularLocation>
    <text>Paraxonemal body. And paraxonemal bodies (PABs).</text>
</comment>
<comment type="miscellaneous">
    <text>The FB strain is deficient in phototaxis. It is not known if this is due to defective adenylate cyclase activity or defective BLUF domains in this protein. In wild-type E.gracilis, photoactivated adenylate cyclase is found in the paraxonemal bodies (PABs). PABs are not visible in all cells in this strain, and are smaller than in wild-type.</text>
</comment>
<comment type="similarity">
    <text evidence="3">Belongs to the adenylyl cyclase class-4/guanylyl cyclase family.</text>
</comment>
<protein>
    <recommendedName>
        <fullName>Photoactivated adenylate cyclase subunit alpha-like protein FB</fullName>
    </recommendedName>
</protein>
<accession>P84737</accession>
<accession>Q2P9N0</accession>
<name>PALFB_EUGGR</name>
<gene>
    <name evidence="7" type="primary">pacA</name>
</gene>
<organism>
    <name type="scientific">Euglena gracilis</name>
    <dbReference type="NCBI Taxonomy" id="3039"/>
    <lineage>
        <taxon>Eukaryota</taxon>
        <taxon>Discoba</taxon>
        <taxon>Euglenozoa</taxon>
        <taxon>Euglenida</taxon>
        <taxon>Spirocuta</taxon>
        <taxon>Euglenophyceae</taxon>
        <taxon>Euglenales</taxon>
        <taxon>Euglenaceae</taxon>
        <taxon>Euglena</taxon>
    </lineage>
</organism>
<sequence>MYILVWKEGQQIRTFQDLEECGQFQTASNITDGQIFSINVTPTMSKGGETGETQLRRLMYLSASTEPEKCYAEYLADMAHVATLRNKQIGVSGFLLYSSPFFFEVIEGTDEELDFLFAKISADPRHVRCIVLANGPCTGRLYGEWHMKDSHIDNITKHPAIKTILFQIARSFSCMWSYLPKNAANMLLLGKNPNKQAPEPMSVVVTFIYLVEFSSILAHPGQTEQCADILAAFVDACVRNVEGTGAQVAKFITGICIAYWPINRAEDALIGLQQLSEDLAELRSQQRPGSALSLIYSRCGVHYGRALLCNAGFRKADFTLLGDCINTASRITSLSVKLKVPLLLSFEVRCVLGDEMREVLETSGLHKVKGRDQPVQVYQFNARELDSAMVRAKIEQLNPGSYRALCPVKPYESLLPAQRPPIFDDTPRENQPKLSQVQRRDSLVDRLSLIAKLAFPTSMMAGGEGQLITLTYISQAAHPMTRLDLASIQRIAFARNESSNITGSLLHVSGLFVQTLEGPKGAVVSLYLKIRQDKRHKDVVADFMAPSEGREYGSPLDMTSATEEMLTSFPPLQELLTHLAKPFISLETYVPTTVVRYLTAGNNPRNLQPVSVEVVLLATDICSFTPLSEKCSLTEVWTICKTIFVAFIRAIFNEGGEVIKLIGDCVTAYFPPTGADKAVHACQEIVTFCAQLGDAFHDVLDCRSVVACGVGLDFGQVIMAQCGSLGMTEFVVAGEVSARVMEVVALTREAGRAIVITEPLPDRLAPKLRDTGIIPCQEGVDGVPCYGNLGPEWELDVATIKKNIYGFHDARALAAMKKVDVGTNAPGRGAPAGGIPSSPKVRPPGRTNSVSSYTPDPNEALDPPMAESVFLDMCHQRGDTANNSIAVKLRQAANDDRLDLGRMLQGPHELMPVMQAIKHLTNLRMLNMSDNFVVDNNVGELVESCIPMRSLQVLDLSNNPGLTKVIALKRLIKHNTQVREFLLNGTRIAPTEQRKLQSSMNVNRLCASTDLKGSHKYEH</sequence>
<proteinExistence type="evidence at transcript level"/>
<keyword id="KW-0966">Cell projection</keyword>
<keyword id="KW-0969">Cilium</keyword>
<keyword id="KW-0282">Flagellum</keyword>
<keyword id="KW-0677">Repeat</keyword>
<feature type="chain" id="PRO_0000195720" description="Photoactivated adenylate cyclase subunit alpha-like protein FB">
    <location>
        <begin position="1"/>
        <end position="1019"/>
    </location>
</feature>
<feature type="domain" description="BLUF 1" evidence="2">
    <location>
        <begin position="55"/>
        <end position="148"/>
    </location>
</feature>
<feature type="domain" description="Guanylate cyclase 1" evidence="3">
    <location>
        <begin position="204"/>
        <end position="332"/>
    </location>
</feature>
<feature type="domain" description="BLUF 2" evidence="2">
    <location>
        <begin position="467"/>
        <end position="559"/>
    </location>
</feature>
<feature type="domain" description="Guanylate cyclase 2" evidence="3">
    <location>
        <begin position="615"/>
        <end position="744"/>
    </location>
</feature>
<feature type="region of interest" description="Disordered" evidence="4">
    <location>
        <begin position="825"/>
        <end position="862"/>
    </location>
</feature>
<feature type="compositionally biased region" description="Low complexity" evidence="4">
    <location>
        <begin position="825"/>
        <end position="839"/>
    </location>
</feature>
<feature type="compositionally biased region" description="Polar residues" evidence="4">
    <location>
        <begin position="846"/>
        <end position="855"/>
    </location>
</feature>
<evidence type="ECO:0000250" key="1">
    <source>
        <dbReference type="UniProtKB" id="Q8S9F2"/>
    </source>
</evidence>
<evidence type="ECO:0000255" key="2">
    <source>
        <dbReference type="PROSITE-ProRule" id="PRU00030"/>
    </source>
</evidence>
<evidence type="ECO:0000255" key="3">
    <source>
        <dbReference type="PROSITE-ProRule" id="PRU00099"/>
    </source>
</evidence>
<evidence type="ECO:0000256" key="4">
    <source>
        <dbReference type="SAM" id="MobiDB-lite"/>
    </source>
</evidence>
<evidence type="ECO:0000269" key="5">
    <source>
    </source>
</evidence>
<evidence type="ECO:0000305" key="6"/>
<evidence type="ECO:0000312" key="7">
    <source>
        <dbReference type="EMBL" id="CAJ57394.1"/>
    </source>
</evidence>
<reference evidence="6 7" key="1">
    <citation type="journal article" date="2005" name="Photochem. Photobiol. Sci.">
        <title>Photoactivated adenylyl cyclase (PAC) genes in the flagellate Euglena gracilis mutant strains.</title>
        <authorList>
            <person name="Ntefidou M."/>
            <person name="Haeder D.-P."/>
        </authorList>
    </citation>
    <scope>NUCLEOTIDE SEQUENCE [MRNA]</scope>
    <scope>SUBCELLULAR LOCATION</scope>
    <source>
        <strain evidence="5">FB</strain>
    </source>
</reference>
<dbReference type="EMBL" id="AM181335">
    <property type="protein sequence ID" value="CAJ57394.1"/>
    <property type="molecule type" value="mRNA"/>
</dbReference>
<dbReference type="SMR" id="P84737"/>
<dbReference type="GO" id="GO:0031514">
    <property type="term" value="C:motile cilium"/>
    <property type="evidence" value="ECO:0000314"/>
    <property type="project" value="UniProtKB"/>
</dbReference>
<dbReference type="GO" id="GO:0009882">
    <property type="term" value="F:blue light photoreceptor activity"/>
    <property type="evidence" value="ECO:0007669"/>
    <property type="project" value="InterPro"/>
</dbReference>
<dbReference type="GO" id="GO:0071949">
    <property type="term" value="F:FAD binding"/>
    <property type="evidence" value="ECO:0007669"/>
    <property type="project" value="InterPro"/>
</dbReference>
<dbReference type="GO" id="GO:0009190">
    <property type="term" value="P:cyclic nucleotide biosynthetic process"/>
    <property type="evidence" value="ECO:0007669"/>
    <property type="project" value="InterPro"/>
</dbReference>
<dbReference type="CDD" id="cd07302">
    <property type="entry name" value="CHD"/>
    <property type="match status" value="2"/>
</dbReference>
<dbReference type="FunFam" id="3.30.70.1230:FF:000065">
    <property type="entry name" value="Photoactivated adenylate cyclase subunit alpha-like protein ST"/>
    <property type="match status" value="1"/>
</dbReference>
<dbReference type="FunFam" id="3.30.70.100:FF:000061">
    <property type="entry name" value="Photoactivated adenylate cyclase subunit beta-like protein 1224-5/1F"/>
    <property type="match status" value="1"/>
</dbReference>
<dbReference type="FunFam" id="3.30.70.1230:FF:000058">
    <property type="entry name" value="Photoactivated adenylate cyclase subunit beta-like protein FB"/>
    <property type="match status" value="1"/>
</dbReference>
<dbReference type="FunFam" id="3.30.70.100:FF:000064">
    <property type="entry name" value="Photoactivated adenylate cyclase subunit beta-like protein ST"/>
    <property type="match status" value="1"/>
</dbReference>
<dbReference type="Gene3D" id="3.30.70.100">
    <property type="match status" value="2"/>
</dbReference>
<dbReference type="Gene3D" id="3.30.70.1230">
    <property type="entry name" value="Nucleotide cyclase"/>
    <property type="match status" value="2"/>
</dbReference>
<dbReference type="Gene3D" id="3.80.10.10">
    <property type="entry name" value="Ribonuclease Inhibitor"/>
    <property type="match status" value="1"/>
</dbReference>
<dbReference type="InterPro" id="IPR001054">
    <property type="entry name" value="A/G_cyclase"/>
</dbReference>
<dbReference type="InterPro" id="IPR036046">
    <property type="entry name" value="Acylphosphatase-like_dom_sf"/>
</dbReference>
<dbReference type="InterPro" id="IPR050697">
    <property type="entry name" value="Adenylyl/Guanylyl_Cyclase_3/4"/>
</dbReference>
<dbReference type="InterPro" id="IPR007024">
    <property type="entry name" value="BLUF_domain"/>
</dbReference>
<dbReference type="InterPro" id="IPR032675">
    <property type="entry name" value="LRR_dom_sf"/>
</dbReference>
<dbReference type="InterPro" id="IPR029787">
    <property type="entry name" value="Nucleotide_cyclase"/>
</dbReference>
<dbReference type="PANTHER" id="PTHR43081:SF1">
    <property type="entry name" value="ADENYLATE CYCLASE, TERMINAL-DIFFERENTIATION SPECIFIC"/>
    <property type="match status" value="1"/>
</dbReference>
<dbReference type="PANTHER" id="PTHR43081">
    <property type="entry name" value="ADENYLATE CYCLASE, TERMINAL-DIFFERENTIATION SPECIFIC-RELATED"/>
    <property type="match status" value="1"/>
</dbReference>
<dbReference type="Pfam" id="PF04940">
    <property type="entry name" value="BLUF"/>
    <property type="match status" value="2"/>
</dbReference>
<dbReference type="Pfam" id="PF00211">
    <property type="entry name" value="Guanylate_cyc"/>
    <property type="match status" value="2"/>
</dbReference>
<dbReference type="SMART" id="SM01034">
    <property type="entry name" value="BLUF"/>
    <property type="match status" value="2"/>
</dbReference>
<dbReference type="SUPFAM" id="SSF54975">
    <property type="entry name" value="Acylphosphatase/BLUF domain-like"/>
    <property type="match status" value="2"/>
</dbReference>
<dbReference type="SUPFAM" id="SSF55073">
    <property type="entry name" value="Nucleotide cyclase"/>
    <property type="match status" value="2"/>
</dbReference>
<dbReference type="SUPFAM" id="SSF52047">
    <property type="entry name" value="RNI-like"/>
    <property type="match status" value="1"/>
</dbReference>
<dbReference type="PROSITE" id="PS50925">
    <property type="entry name" value="BLUF"/>
    <property type="match status" value="2"/>
</dbReference>
<dbReference type="PROSITE" id="PS50125">
    <property type="entry name" value="GUANYLATE_CYCLASE_2"/>
    <property type="match status" value="2"/>
</dbReference>